<reference key="1">
    <citation type="journal article" date="2005" name="Nature">
        <title>The map-based sequence of the rice genome.</title>
        <authorList>
            <consortium name="International rice genome sequencing project (IRGSP)"/>
        </authorList>
    </citation>
    <scope>NUCLEOTIDE SEQUENCE [LARGE SCALE GENOMIC DNA]</scope>
    <source>
        <strain>cv. Nipponbare</strain>
    </source>
</reference>
<reference key="2">
    <citation type="journal article" date="2008" name="Nucleic Acids Res.">
        <title>The rice annotation project database (RAP-DB): 2008 update.</title>
        <authorList>
            <consortium name="The rice annotation project (RAP)"/>
        </authorList>
    </citation>
    <scope>GENOME REANNOTATION</scope>
    <source>
        <strain>cv. Nipponbare</strain>
    </source>
</reference>
<reference key="3">
    <citation type="journal article" date="2013" name="Rice">
        <title>Improvement of the Oryza sativa Nipponbare reference genome using next generation sequence and optical map data.</title>
        <authorList>
            <person name="Kawahara Y."/>
            <person name="de la Bastide M."/>
            <person name="Hamilton J.P."/>
            <person name="Kanamori H."/>
            <person name="McCombie W.R."/>
            <person name="Ouyang S."/>
            <person name="Schwartz D.C."/>
            <person name="Tanaka T."/>
            <person name="Wu J."/>
            <person name="Zhou S."/>
            <person name="Childs K.L."/>
            <person name="Davidson R.M."/>
            <person name="Lin H."/>
            <person name="Quesada-Ocampo L."/>
            <person name="Vaillancourt B."/>
            <person name="Sakai H."/>
            <person name="Lee S.S."/>
            <person name="Kim J."/>
            <person name="Numa H."/>
            <person name="Itoh T."/>
            <person name="Buell C.R."/>
            <person name="Matsumoto T."/>
        </authorList>
    </citation>
    <scope>GENOME REANNOTATION</scope>
    <source>
        <strain>cv. Nipponbare</strain>
    </source>
</reference>
<reference key="4">
    <citation type="journal article" date="2005" name="PLoS Biol.">
        <title>The genomes of Oryza sativa: a history of duplications.</title>
        <authorList>
            <person name="Yu J."/>
            <person name="Wang J."/>
            <person name="Lin W."/>
            <person name="Li S."/>
            <person name="Li H."/>
            <person name="Zhou J."/>
            <person name="Ni P."/>
            <person name="Dong W."/>
            <person name="Hu S."/>
            <person name="Zeng C."/>
            <person name="Zhang J."/>
            <person name="Zhang Y."/>
            <person name="Li R."/>
            <person name="Xu Z."/>
            <person name="Li S."/>
            <person name="Li X."/>
            <person name="Zheng H."/>
            <person name="Cong L."/>
            <person name="Lin L."/>
            <person name="Yin J."/>
            <person name="Geng J."/>
            <person name="Li G."/>
            <person name="Shi J."/>
            <person name="Liu J."/>
            <person name="Lv H."/>
            <person name="Li J."/>
            <person name="Wang J."/>
            <person name="Deng Y."/>
            <person name="Ran L."/>
            <person name="Shi X."/>
            <person name="Wang X."/>
            <person name="Wu Q."/>
            <person name="Li C."/>
            <person name="Ren X."/>
            <person name="Wang J."/>
            <person name="Wang X."/>
            <person name="Li D."/>
            <person name="Liu D."/>
            <person name="Zhang X."/>
            <person name="Ji Z."/>
            <person name="Zhao W."/>
            <person name="Sun Y."/>
            <person name="Zhang Z."/>
            <person name="Bao J."/>
            <person name="Han Y."/>
            <person name="Dong L."/>
            <person name="Ji J."/>
            <person name="Chen P."/>
            <person name="Wu S."/>
            <person name="Liu J."/>
            <person name="Xiao Y."/>
            <person name="Bu D."/>
            <person name="Tan J."/>
            <person name="Yang L."/>
            <person name="Ye C."/>
            <person name="Zhang J."/>
            <person name="Xu J."/>
            <person name="Zhou Y."/>
            <person name="Yu Y."/>
            <person name="Zhang B."/>
            <person name="Zhuang S."/>
            <person name="Wei H."/>
            <person name="Liu B."/>
            <person name="Lei M."/>
            <person name="Yu H."/>
            <person name="Li Y."/>
            <person name="Xu H."/>
            <person name="Wei S."/>
            <person name="He X."/>
            <person name="Fang L."/>
            <person name="Zhang Z."/>
            <person name="Zhang Y."/>
            <person name="Huang X."/>
            <person name="Su Z."/>
            <person name="Tong W."/>
            <person name="Li J."/>
            <person name="Tong Z."/>
            <person name="Li S."/>
            <person name="Ye J."/>
            <person name="Wang L."/>
            <person name="Fang L."/>
            <person name="Lei T."/>
            <person name="Chen C.-S."/>
            <person name="Chen H.-C."/>
            <person name="Xu Z."/>
            <person name="Li H."/>
            <person name="Huang H."/>
            <person name="Zhang F."/>
            <person name="Xu H."/>
            <person name="Li N."/>
            <person name="Zhao C."/>
            <person name="Li S."/>
            <person name="Dong L."/>
            <person name="Huang Y."/>
            <person name="Li L."/>
            <person name="Xi Y."/>
            <person name="Qi Q."/>
            <person name="Li W."/>
            <person name="Zhang B."/>
            <person name="Hu W."/>
            <person name="Zhang Y."/>
            <person name="Tian X."/>
            <person name="Jiao Y."/>
            <person name="Liang X."/>
            <person name="Jin J."/>
            <person name="Gao L."/>
            <person name="Zheng W."/>
            <person name="Hao B."/>
            <person name="Liu S.-M."/>
            <person name="Wang W."/>
            <person name="Yuan L."/>
            <person name="Cao M."/>
            <person name="McDermott J."/>
            <person name="Samudrala R."/>
            <person name="Wang J."/>
            <person name="Wong G.K.-S."/>
            <person name="Yang H."/>
        </authorList>
    </citation>
    <scope>NUCLEOTIDE SEQUENCE [LARGE SCALE GENOMIC DNA]</scope>
    <source>
        <strain>cv. Nipponbare</strain>
    </source>
</reference>
<reference key="5">
    <citation type="journal article" date="2003" name="Science">
        <title>Collection, mapping, and annotation of over 28,000 cDNA clones from japonica rice.</title>
        <authorList>
            <consortium name="The rice full-length cDNA consortium"/>
        </authorList>
    </citation>
    <scope>NUCLEOTIDE SEQUENCE [LARGE SCALE MRNA]</scope>
    <source>
        <strain>cv. Nipponbare</strain>
    </source>
</reference>
<reference key="6">
    <citation type="journal article" date="2008" name="Biochem. Biophys. Res. Commun.">
        <title>Resistance to Magnaporthe grisea in transgenic rice with suppressed expression of genes encoding allene oxide cyclase and phytodienoic acid reductase.</title>
        <authorList>
            <person name="Yara A."/>
            <person name="Yaeno T."/>
            <person name="Hasegawa M."/>
            <person name="Seto H."/>
            <person name="Seo S."/>
            <person name="Kusumi K."/>
            <person name="Iba K."/>
        </authorList>
    </citation>
    <scope>INDUCTION</scope>
</reference>
<reference key="7">
    <citation type="journal article" date="2008" name="Planta">
        <title>Identification of the OsOPR7 gene encoding 12-oxophytodienoate reductase involved in the biosynthesis of jasmonic acid in rice.</title>
        <authorList>
            <person name="Tani T."/>
            <person name="Sobajima H."/>
            <person name="Okada K."/>
            <person name="Chujo T."/>
            <person name="Arimura S."/>
            <person name="Tsutsumi N."/>
            <person name="Nishimura M."/>
            <person name="Seto H."/>
            <person name="Nojiri H."/>
            <person name="Yamane H."/>
        </authorList>
    </citation>
    <scope>FUNCTION</scope>
    <scope>CATALYTIC ACTIVITY</scope>
    <scope>SUBCELLULAR LOCATION</scope>
    <scope>INDUCTION</scope>
</reference>
<reference key="8">
    <citation type="journal article" date="2018" name="Plant Cell Rep.">
        <title>OPEN GLUME1: a key enzyme reducing the precursor of JA, participates in carbohydrate transport of lodicules during anthesis in rice.</title>
        <authorList>
            <person name="Li X."/>
            <person name="Wang Y."/>
            <person name="Duan E."/>
            <person name="Qi Q."/>
            <person name="Zhou K."/>
            <person name="Lin Q."/>
            <person name="Wang D."/>
            <person name="Wang Y."/>
            <person name="Long W."/>
            <person name="Zhao Z."/>
            <person name="Cheng Z."/>
            <person name="Lei C."/>
            <person name="Zhang X."/>
            <person name="Guo X."/>
            <person name="Wang J."/>
            <person name="Wu C."/>
            <person name="Jiang L."/>
            <person name="Wang C."/>
            <person name="Wan J."/>
        </authorList>
    </citation>
    <scope>FUNCTION</scope>
    <scope>DISRUPTION PHENOTYPE</scope>
</reference>
<sequence length="394" mass="43677">MDRPPPDQQRQKQAPLFSPYQMPRFRLNHRVVLAPMTRCRAIGGVPGPALAEYYAQRTTQGGLLISEGTVVSPAGPGFPHVPGIYNQEQTDAWKKVVDAVHAKGGIFFCQLWHVGRASHQVYQPNGAAPISSTDKPISARWRILMPDGSYGKYPKPRRLAASEIPEIVEQYRQAAINAIEAGFDGIEIHGAHGYIIDQFLKDGINDRTDEYGGSLSNRCRFLLEVTRAVVSAIGADRVAVRISPAIDHLDAYDSDPIKLGMAVVERLNALQQQSGRLAYLHVTQPRYTAYGQTESGQHGSAEEESRLMRTLRGTYQGTFMCSGGYTRELGLEAVESGDADLVSYGRLFISNPDLVERFRLNAGLNKYVRKTFYTPDPVVGYTDYPFLGQPKSRM</sequence>
<feature type="chain" id="PRO_0000410713" description="12-oxophytodienoate reductase 7">
    <location>
        <begin position="1"/>
        <end position="394"/>
    </location>
</feature>
<feature type="short sequence motif" description="Microbody targeting signal" evidence="2">
    <location>
        <begin position="392"/>
        <end position="394"/>
    </location>
</feature>
<feature type="active site" description="Proton donor" evidence="1">
    <location>
        <position position="194"/>
    </location>
</feature>
<feature type="binding site" evidence="1">
    <location>
        <begin position="35"/>
        <end position="37"/>
    </location>
    <ligand>
        <name>FMN</name>
        <dbReference type="ChEBI" id="CHEBI:58210"/>
    </ligand>
</feature>
<feature type="binding site" evidence="1">
    <location>
        <position position="110"/>
    </location>
    <ligand>
        <name>FMN</name>
        <dbReference type="ChEBI" id="CHEBI:58210"/>
    </ligand>
</feature>
<feature type="binding site" evidence="1">
    <location>
        <begin position="189"/>
        <end position="192"/>
    </location>
    <ligand>
        <name>substrate</name>
    </ligand>
</feature>
<feature type="binding site" evidence="1">
    <location>
        <position position="241"/>
    </location>
    <ligand>
        <name>FMN</name>
        <dbReference type="ChEBI" id="CHEBI:58210"/>
    </ligand>
</feature>
<feature type="binding site" evidence="1">
    <location>
        <position position="286"/>
    </location>
    <ligand>
        <name>substrate</name>
    </ligand>
</feature>
<feature type="binding site" evidence="1">
    <location>
        <position position="324"/>
    </location>
    <ligand>
        <name>FMN</name>
        <dbReference type="ChEBI" id="CHEBI:58210"/>
    </ligand>
</feature>
<feature type="binding site" evidence="1">
    <location>
        <begin position="345"/>
        <end position="346"/>
    </location>
    <ligand>
        <name>FMN</name>
        <dbReference type="ChEBI" id="CHEBI:58210"/>
    </ligand>
</feature>
<proteinExistence type="evidence at protein level"/>
<dbReference type="EC" id="1.3.1.42" evidence="3"/>
<dbReference type="EMBL" id="AP004586">
    <property type="protein sequence ID" value="BAD09599.1"/>
    <property type="molecule type" value="Genomic_DNA"/>
</dbReference>
<dbReference type="EMBL" id="AP004707">
    <property type="protein sequence ID" value="BAD09954.1"/>
    <property type="molecule type" value="Genomic_DNA"/>
</dbReference>
<dbReference type="EMBL" id="AP008214">
    <property type="protein sequence ID" value="BAF23889.1"/>
    <property type="molecule type" value="Genomic_DNA"/>
</dbReference>
<dbReference type="EMBL" id="AP014964">
    <property type="protein sequence ID" value="BAT05755.1"/>
    <property type="molecule type" value="Genomic_DNA"/>
</dbReference>
<dbReference type="EMBL" id="CM000145">
    <property type="protein sequence ID" value="EAZ42984.1"/>
    <property type="molecule type" value="Genomic_DNA"/>
</dbReference>
<dbReference type="EMBL" id="AK071203">
    <property type="protein sequence ID" value="BAG92371.1"/>
    <property type="molecule type" value="mRNA"/>
</dbReference>
<dbReference type="EMBL" id="AK104843">
    <property type="protein sequence ID" value="BAG96990.1"/>
    <property type="molecule type" value="mRNA"/>
</dbReference>
<dbReference type="RefSeq" id="XP_015650809.1">
    <property type="nucleotide sequence ID" value="XM_015795323.1"/>
</dbReference>
<dbReference type="SMR" id="Q6Z965"/>
<dbReference type="FunCoup" id="Q6Z965">
    <property type="interactions" value="407"/>
</dbReference>
<dbReference type="STRING" id="39947.Q6Z965"/>
<dbReference type="PaxDb" id="39947-Q6Z965"/>
<dbReference type="EnsemblPlants" id="Os08t0459600-01">
    <property type="protein sequence ID" value="Os08t0459600-01"/>
    <property type="gene ID" value="Os08g0459600"/>
</dbReference>
<dbReference type="Gramene" id="Os08t0459600-01">
    <property type="protein sequence ID" value="Os08t0459600-01"/>
    <property type="gene ID" value="Os08g0459600"/>
</dbReference>
<dbReference type="KEGG" id="dosa:Os08g0459600"/>
<dbReference type="eggNOG" id="KOG0134">
    <property type="taxonomic scope" value="Eukaryota"/>
</dbReference>
<dbReference type="HOGENOM" id="CLU_012153_0_2_1"/>
<dbReference type="InParanoid" id="Q6Z965"/>
<dbReference type="OMA" id="GKGPVGY"/>
<dbReference type="OrthoDB" id="1663137at2759"/>
<dbReference type="PlantReactome" id="R-OSA-1119332">
    <property type="pathway name" value="Jasmonic acid biosynthesis"/>
</dbReference>
<dbReference type="PlantReactome" id="R-OSA-6787011">
    <property type="pathway name" value="Jasmonic acid signaling"/>
</dbReference>
<dbReference type="UniPathway" id="UPA00382"/>
<dbReference type="Proteomes" id="UP000000763">
    <property type="component" value="Chromosome 8"/>
</dbReference>
<dbReference type="Proteomes" id="UP000007752">
    <property type="component" value="Chromosome 8"/>
</dbReference>
<dbReference type="Proteomes" id="UP000059680">
    <property type="component" value="Chromosome 8"/>
</dbReference>
<dbReference type="GO" id="GO:0005777">
    <property type="term" value="C:peroxisome"/>
    <property type="evidence" value="ECO:0000314"/>
    <property type="project" value="UniProtKB"/>
</dbReference>
<dbReference type="GO" id="GO:0016629">
    <property type="term" value="F:12-oxophytodienoate reductase activity"/>
    <property type="evidence" value="ECO:0000314"/>
    <property type="project" value="UniProtKB"/>
</dbReference>
<dbReference type="GO" id="GO:0010181">
    <property type="term" value="F:FMN binding"/>
    <property type="evidence" value="ECO:0007669"/>
    <property type="project" value="EnsemblPlants"/>
</dbReference>
<dbReference type="GO" id="GO:0009695">
    <property type="term" value="P:jasmonic acid biosynthetic process"/>
    <property type="evidence" value="ECO:0000314"/>
    <property type="project" value="UniProtKB"/>
</dbReference>
<dbReference type="GO" id="GO:0031408">
    <property type="term" value="P:oxylipin biosynthetic process"/>
    <property type="evidence" value="ECO:0000314"/>
    <property type="project" value="UniProtKB"/>
</dbReference>
<dbReference type="GO" id="GO:0009620">
    <property type="term" value="P:response to fungus"/>
    <property type="evidence" value="ECO:0007669"/>
    <property type="project" value="EnsemblPlants"/>
</dbReference>
<dbReference type="GO" id="GO:0010193">
    <property type="term" value="P:response to ozone"/>
    <property type="evidence" value="ECO:0007669"/>
    <property type="project" value="EnsemblPlants"/>
</dbReference>
<dbReference type="GO" id="GO:0048443">
    <property type="term" value="P:stamen development"/>
    <property type="evidence" value="ECO:0007669"/>
    <property type="project" value="EnsemblPlants"/>
</dbReference>
<dbReference type="CDD" id="cd02933">
    <property type="entry name" value="OYE_like_FMN"/>
    <property type="match status" value="1"/>
</dbReference>
<dbReference type="FunFam" id="3.20.20.70:FF:000073">
    <property type="entry name" value="12-oxophytodienoate reductase 3"/>
    <property type="match status" value="1"/>
</dbReference>
<dbReference type="Gene3D" id="3.20.20.70">
    <property type="entry name" value="Aldolase class I"/>
    <property type="match status" value="1"/>
</dbReference>
<dbReference type="InterPro" id="IPR013785">
    <property type="entry name" value="Aldolase_TIM"/>
</dbReference>
<dbReference type="InterPro" id="IPR001155">
    <property type="entry name" value="OxRdtase_FMN_N"/>
</dbReference>
<dbReference type="InterPro" id="IPR045247">
    <property type="entry name" value="Oye-like"/>
</dbReference>
<dbReference type="PANTHER" id="PTHR22893:SF112">
    <property type="entry name" value="12-OXOPHYTODIENOATE REDUCTASE 3"/>
    <property type="match status" value="1"/>
</dbReference>
<dbReference type="PANTHER" id="PTHR22893">
    <property type="entry name" value="NADH OXIDOREDUCTASE-RELATED"/>
    <property type="match status" value="1"/>
</dbReference>
<dbReference type="Pfam" id="PF00724">
    <property type="entry name" value="Oxidored_FMN"/>
    <property type="match status" value="1"/>
</dbReference>
<dbReference type="SUPFAM" id="SSF51395">
    <property type="entry name" value="FMN-linked oxidoreductases"/>
    <property type="match status" value="1"/>
</dbReference>
<protein>
    <recommendedName>
        <fullName evidence="6">12-oxophytodienoate reductase 7</fullName>
        <ecNumber evidence="3">1.3.1.42</ecNumber>
    </recommendedName>
    <alternativeName>
        <fullName evidence="9">12-oxophytodienoate-10,11-reductase 7</fullName>
        <shortName evidence="6">OPDA-reductase 7</shortName>
        <shortName evidence="6">OsOPR7</shortName>
    </alternativeName>
    <alternativeName>
        <fullName evidence="8">Protein OPEN GLUME 1</fullName>
    </alternativeName>
</protein>
<accession>Q6Z965</accession>
<accession>A0A0P0XGE5</accession>
<gene>
    <name evidence="6" type="primary">OPR7</name>
    <name evidence="8" type="synonym">OG1</name>
    <name evidence="7" type="synonym">OPR13</name>
    <name evidence="7" type="synonym">OPR3</name>
    <name evidence="12" type="ordered locus">Os08g045960</name>
    <name evidence="9" type="ordered locus">LOC_Os08g35740</name>
    <name evidence="13" type="ORF">OsJ_27573</name>
    <name evidence="10" type="ORF">P0493A04.35</name>
    <name evidence="11" type="ORF">P0690E03.3</name>
</gene>
<organism>
    <name type="scientific">Oryza sativa subsp. japonica</name>
    <name type="common">Rice</name>
    <dbReference type="NCBI Taxonomy" id="39947"/>
    <lineage>
        <taxon>Eukaryota</taxon>
        <taxon>Viridiplantae</taxon>
        <taxon>Streptophyta</taxon>
        <taxon>Embryophyta</taxon>
        <taxon>Tracheophyta</taxon>
        <taxon>Spermatophyta</taxon>
        <taxon>Magnoliopsida</taxon>
        <taxon>Liliopsida</taxon>
        <taxon>Poales</taxon>
        <taxon>Poaceae</taxon>
        <taxon>BOP clade</taxon>
        <taxon>Oryzoideae</taxon>
        <taxon>Oryzeae</taxon>
        <taxon>Oryzinae</taxon>
        <taxon>Oryza</taxon>
        <taxon>Oryza sativa</taxon>
    </lineage>
</organism>
<evidence type="ECO:0000250" key="1">
    <source>
        <dbReference type="UniProtKB" id="P42593"/>
    </source>
</evidence>
<evidence type="ECO:0000255" key="2"/>
<evidence type="ECO:0000269" key="3">
    <source>
    </source>
</evidence>
<evidence type="ECO:0000269" key="4">
    <source>
    </source>
</evidence>
<evidence type="ECO:0000269" key="5">
    <source>
    </source>
</evidence>
<evidence type="ECO:0000303" key="6">
    <source>
    </source>
</evidence>
<evidence type="ECO:0000303" key="7">
    <source>
    </source>
</evidence>
<evidence type="ECO:0000303" key="8">
    <source>
    </source>
</evidence>
<evidence type="ECO:0000305" key="9"/>
<evidence type="ECO:0000312" key="10">
    <source>
        <dbReference type="EMBL" id="BAD09599.1"/>
    </source>
</evidence>
<evidence type="ECO:0000312" key="11">
    <source>
        <dbReference type="EMBL" id="BAD09954.1"/>
    </source>
</evidence>
<evidence type="ECO:0000312" key="12">
    <source>
        <dbReference type="EMBL" id="BAT05755.1"/>
    </source>
</evidence>
<evidence type="ECO:0000312" key="13">
    <source>
        <dbReference type="EMBL" id="EAZ42984.1"/>
    </source>
</evidence>
<name>OPR7_ORYSJ</name>
<comment type="function">
    <text evidence="3 5">Involved in the biosynthesis of jasmonate (JA) and perhaps in biosynthesis or metabolism of other oxylipin signaling moleclules (PubMed:17938955, PubMed:29177846). In vitro, reduces cis(+)-12-oxophytodienoic acid (cis(+)-OPDA) and cis(-)-OPDA to cis(+)-OPC-8:0 and cis(-)-OPC-8:0, respectively (PubMed:17938955). May be required for the spatial and temporal regulation of JA levels during dehiscence of anthers, promoting the stomium degeneration program (PubMed:17938955). Involved in carbohydrate transport underlying normal lodicule function during anthesis (PubMed:29177846).</text>
</comment>
<comment type="catalytic activity">
    <reaction evidence="3">
        <text>(1S,2S)-OPC-8 + NADP(+) = (9S,13S,15Z)-12-oxophyto-10,15-dienoate + NADPH + H(+)</text>
        <dbReference type="Rhea" id="RHEA:21888"/>
        <dbReference type="ChEBI" id="CHEBI:15378"/>
        <dbReference type="ChEBI" id="CHEBI:57411"/>
        <dbReference type="ChEBI" id="CHEBI:57783"/>
        <dbReference type="ChEBI" id="CHEBI:58349"/>
        <dbReference type="ChEBI" id="CHEBI:191855"/>
        <dbReference type="EC" id="1.3.1.42"/>
    </reaction>
    <physiologicalReaction direction="right-to-left" evidence="3">
        <dbReference type="Rhea" id="RHEA:21890"/>
    </physiologicalReaction>
</comment>
<comment type="cofactor">
    <cofactor evidence="1">
        <name>FMN</name>
        <dbReference type="ChEBI" id="CHEBI:58210"/>
    </cofactor>
</comment>
<comment type="pathway">
    <text evidence="9">Lipid metabolism; oxylipin biosynthesis.</text>
</comment>
<comment type="subcellular location">
    <subcellularLocation>
        <location evidence="3">Peroxisome</location>
    </subcellularLocation>
</comment>
<comment type="induction">
    <text evidence="3 4">By wounding, jasmonate and drought stress.</text>
</comment>
<comment type="disruption phenotype">
    <text evidence="5">Open glumes after anthesis associated with a delayed cell degradation process of the lodicules (PubMed:29177846). Reduced grain filling (PubMed:29177846).</text>
</comment>
<comment type="miscellaneous">
    <text evidence="3">Over-expression of OPR7 in Arabidopsis thaliana opr3 mutant functionally complements the male sterility phenotype and restores jasmonate production.</text>
</comment>
<comment type="similarity">
    <text evidence="9">Belongs to the NADH:flavin oxidoreductase/NADH oxidase family.</text>
</comment>
<keyword id="KW-0275">Fatty acid biosynthesis</keyword>
<keyword id="KW-0276">Fatty acid metabolism</keyword>
<keyword id="KW-0285">Flavoprotein</keyword>
<keyword id="KW-0288">FMN</keyword>
<keyword id="KW-0444">Lipid biosynthesis</keyword>
<keyword id="KW-0443">Lipid metabolism</keyword>
<keyword id="KW-0521">NADP</keyword>
<keyword id="KW-0560">Oxidoreductase</keyword>
<keyword id="KW-0925">Oxylipin biosynthesis</keyword>
<keyword id="KW-0576">Peroxisome</keyword>
<keyword id="KW-1185">Reference proteome</keyword>